<sequence>MKHRIGRVETQIQREVDDILLKDVNDPRVKGVTITGVKLTGDLQHATIFYSILDDAPDKVEAAQTGLDKASGLIRREVGQRIRLFKVPEIEFAQDKSVQYGARIDQLINEVRRKNLE</sequence>
<name>RBFA_LACP3</name>
<feature type="chain" id="PRO_1000000124" description="Ribosome-binding factor A">
    <location>
        <begin position="1"/>
        <end position="117"/>
    </location>
</feature>
<accession>Q038M6</accession>
<keyword id="KW-0963">Cytoplasm</keyword>
<keyword id="KW-1185">Reference proteome</keyword>
<keyword id="KW-0690">Ribosome biogenesis</keyword>
<comment type="function">
    <text evidence="1">One of several proteins that assist in the late maturation steps of the functional core of the 30S ribosomal subunit. Associates with free 30S ribosomal subunits (but not with 30S subunits that are part of 70S ribosomes or polysomes). Required for efficient processing of 16S rRNA. May interact with the 5'-terminal helix region of 16S rRNA.</text>
</comment>
<comment type="subunit">
    <text evidence="1">Monomer. Binds 30S ribosomal subunits, but not 50S ribosomal subunits or 70S ribosomes.</text>
</comment>
<comment type="subcellular location">
    <subcellularLocation>
        <location evidence="1">Cytoplasm</location>
    </subcellularLocation>
</comment>
<comment type="similarity">
    <text evidence="1">Belongs to the RbfA family.</text>
</comment>
<gene>
    <name evidence="1" type="primary">rbfA</name>
    <name type="ordered locus">LSEI_1572</name>
</gene>
<organism>
    <name type="scientific">Lacticaseibacillus paracasei (strain ATCC 334 / BCRC 17002 / CCUG 31169 / CIP 107868 / KCTC 3260 / NRRL B-441)</name>
    <name type="common">Lactobacillus paracasei</name>
    <dbReference type="NCBI Taxonomy" id="321967"/>
    <lineage>
        <taxon>Bacteria</taxon>
        <taxon>Bacillati</taxon>
        <taxon>Bacillota</taxon>
        <taxon>Bacilli</taxon>
        <taxon>Lactobacillales</taxon>
        <taxon>Lactobacillaceae</taxon>
        <taxon>Lacticaseibacillus</taxon>
    </lineage>
</organism>
<protein>
    <recommendedName>
        <fullName evidence="1">Ribosome-binding factor A</fullName>
    </recommendedName>
</protein>
<reference key="1">
    <citation type="journal article" date="2006" name="Proc. Natl. Acad. Sci. U.S.A.">
        <title>Comparative genomics of the lactic acid bacteria.</title>
        <authorList>
            <person name="Makarova K.S."/>
            <person name="Slesarev A."/>
            <person name="Wolf Y.I."/>
            <person name="Sorokin A."/>
            <person name="Mirkin B."/>
            <person name="Koonin E.V."/>
            <person name="Pavlov A."/>
            <person name="Pavlova N."/>
            <person name="Karamychev V."/>
            <person name="Polouchine N."/>
            <person name="Shakhova V."/>
            <person name="Grigoriev I."/>
            <person name="Lou Y."/>
            <person name="Rohksar D."/>
            <person name="Lucas S."/>
            <person name="Huang K."/>
            <person name="Goodstein D.M."/>
            <person name="Hawkins T."/>
            <person name="Plengvidhya V."/>
            <person name="Welker D."/>
            <person name="Hughes J."/>
            <person name="Goh Y."/>
            <person name="Benson A."/>
            <person name="Baldwin K."/>
            <person name="Lee J.-H."/>
            <person name="Diaz-Muniz I."/>
            <person name="Dosti B."/>
            <person name="Smeianov V."/>
            <person name="Wechter W."/>
            <person name="Barabote R."/>
            <person name="Lorca G."/>
            <person name="Altermann E."/>
            <person name="Barrangou R."/>
            <person name="Ganesan B."/>
            <person name="Xie Y."/>
            <person name="Rawsthorne H."/>
            <person name="Tamir D."/>
            <person name="Parker C."/>
            <person name="Breidt F."/>
            <person name="Broadbent J.R."/>
            <person name="Hutkins R."/>
            <person name="O'Sullivan D."/>
            <person name="Steele J."/>
            <person name="Unlu G."/>
            <person name="Saier M.H. Jr."/>
            <person name="Klaenhammer T."/>
            <person name="Richardson P."/>
            <person name="Kozyavkin S."/>
            <person name="Weimer B.C."/>
            <person name="Mills D.A."/>
        </authorList>
    </citation>
    <scope>NUCLEOTIDE SEQUENCE [LARGE SCALE GENOMIC DNA]</scope>
    <source>
        <strain>ATCC 334 / BCRC 17002 / CCUG 31169 / CIP 107868 / KCTC 3260 / NRRL B-441</strain>
    </source>
</reference>
<evidence type="ECO:0000255" key="1">
    <source>
        <dbReference type="HAMAP-Rule" id="MF_00003"/>
    </source>
</evidence>
<proteinExistence type="inferred from homology"/>
<dbReference type="EMBL" id="CP000423">
    <property type="protein sequence ID" value="ABJ70346.1"/>
    <property type="molecule type" value="Genomic_DNA"/>
</dbReference>
<dbReference type="RefSeq" id="WP_003565780.1">
    <property type="nucleotide sequence ID" value="NC_008526.1"/>
</dbReference>
<dbReference type="RefSeq" id="YP_806788.1">
    <property type="nucleotide sequence ID" value="NC_008526.1"/>
</dbReference>
<dbReference type="SMR" id="Q038M6"/>
<dbReference type="STRING" id="321967.LSEI_1572"/>
<dbReference type="PaxDb" id="321967-LSEI_1572"/>
<dbReference type="GeneID" id="93269255"/>
<dbReference type="KEGG" id="lca:LSEI_1572"/>
<dbReference type="PATRIC" id="fig|321967.11.peg.1552"/>
<dbReference type="HOGENOM" id="CLU_089475_3_0_9"/>
<dbReference type="PRO" id="PR:Q038M6"/>
<dbReference type="Proteomes" id="UP000001651">
    <property type="component" value="Chromosome"/>
</dbReference>
<dbReference type="GO" id="GO:0005829">
    <property type="term" value="C:cytosol"/>
    <property type="evidence" value="ECO:0007669"/>
    <property type="project" value="TreeGrafter"/>
</dbReference>
<dbReference type="GO" id="GO:0043024">
    <property type="term" value="F:ribosomal small subunit binding"/>
    <property type="evidence" value="ECO:0007669"/>
    <property type="project" value="TreeGrafter"/>
</dbReference>
<dbReference type="GO" id="GO:0030490">
    <property type="term" value="P:maturation of SSU-rRNA"/>
    <property type="evidence" value="ECO:0007669"/>
    <property type="project" value="UniProtKB-UniRule"/>
</dbReference>
<dbReference type="Gene3D" id="3.30.300.20">
    <property type="match status" value="1"/>
</dbReference>
<dbReference type="HAMAP" id="MF_00003">
    <property type="entry name" value="RbfA"/>
    <property type="match status" value="1"/>
</dbReference>
<dbReference type="InterPro" id="IPR015946">
    <property type="entry name" value="KH_dom-like_a/b"/>
</dbReference>
<dbReference type="InterPro" id="IPR000238">
    <property type="entry name" value="RbfA"/>
</dbReference>
<dbReference type="InterPro" id="IPR023799">
    <property type="entry name" value="RbfA_dom_sf"/>
</dbReference>
<dbReference type="InterPro" id="IPR020053">
    <property type="entry name" value="Ribosome-bd_factorA_CS"/>
</dbReference>
<dbReference type="NCBIfam" id="TIGR00082">
    <property type="entry name" value="rbfA"/>
    <property type="match status" value="1"/>
</dbReference>
<dbReference type="PANTHER" id="PTHR33515">
    <property type="entry name" value="RIBOSOME-BINDING FACTOR A, CHLOROPLASTIC-RELATED"/>
    <property type="match status" value="1"/>
</dbReference>
<dbReference type="PANTHER" id="PTHR33515:SF1">
    <property type="entry name" value="RIBOSOME-BINDING FACTOR A, CHLOROPLASTIC-RELATED"/>
    <property type="match status" value="1"/>
</dbReference>
<dbReference type="Pfam" id="PF02033">
    <property type="entry name" value="RBFA"/>
    <property type="match status" value="1"/>
</dbReference>
<dbReference type="SUPFAM" id="SSF89919">
    <property type="entry name" value="Ribosome-binding factor A, RbfA"/>
    <property type="match status" value="1"/>
</dbReference>
<dbReference type="PROSITE" id="PS01319">
    <property type="entry name" value="RBFA"/>
    <property type="match status" value="1"/>
</dbReference>